<accession>A0A183</accession>
<proteinExistence type="evidence at protein level"/>
<sequence length="80" mass="9022">MSQQKQQSWKPPNVPKCSPPQRSNPCLAPYSTPCGAPHSEGCHSSSQRPEVQKPRRARQKLRCLSRGTTYHCKEEECEGD</sequence>
<dbReference type="EMBL" id="DQ991251">
    <property type="protein sequence ID" value="ABJ55982.1"/>
    <property type="molecule type" value="mRNA"/>
</dbReference>
<dbReference type="EMBL" id="AL162596">
    <property type="status" value="NOT_ANNOTATED_CDS"/>
    <property type="molecule type" value="Genomic_DNA"/>
</dbReference>
<dbReference type="CCDS" id="CCDS44227.1"/>
<dbReference type="RefSeq" id="NP_001122072.1">
    <property type="nucleotide sequence ID" value="NM_001128600.2"/>
</dbReference>
<dbReference type="RefSeq" id="XP_016856816.1">
    <property type="nucleotide sequence ID" value="XM_017001327.2"/>
</dbReference>
<dbReference type="RefSeq" id="XP_054192671.1">
    <property type="nucleotide sequence ID" value="XM_054336696.1"/>
</dbReference>
<dbReference type="STRING" id="9606.ENSP00000411070"/>
<dbReference type="GlyGen" id="A0A183">
    <property type="glycosylation" value="2 sites, 1 O-linked glycan (2 sites)"/>
</dbReference>
<dbReference type="BioMuta" id="LCE6A"/>
<dbReference type="MassIVE" id="A0A183"/>
<dbReference type="PaxDb" id="9606-ENSP00000411070"/>
<dbReference type="PeptideAtlas" id="A0A183"/>
<dbReference type="ProteomicsDB" id="0"/>
<dbReference type="Pumba" id="A0A183"/>
<dbReference type="Antibodypedia" id="50350">
    <property type="antibodies" value="7 antibodies from 6 providers"/>
</dbReference>
<dbReference type="DNASU" id="448835"/>
<dbReference type="Ensembl" id="ENST00000431011.3">
    <property type="protein sequence ID" value="ENSP00000411070.2"/>
    <property type="gene ID" value="ENSG00000235942.3"/>
</dbReference>
<dbReference type="GeneID" id="448835"/>
<dbReference type="KEGG" id="hsa:448835"/>
<dbReference type="MANE-Select" id="ENST00000431011.3">
    <property type="protein sequence ID" value="ENSP00000411070.2"/>
    <property type="RefSeq nucleotide sequence ID" value="NM_001128600.2"/>
    <property type="RefSeq protein sequence ID" value="NP_001122072.1"/>
</dbReference>
<dbReference type="UCSC" id="uc001fas.5">
    <property type="organism name" value="human"/>
</dbReference>
<dbReference type="AGR" id="HGNC:31824"/>
<dbReference type="CTD" id="448835"/>
<dbReference type="GeneCards" id="LCE6A"/>
<dbReference type="HGNC" id="HGNC:31824">
    <property type="gene designation" value="LCE6A"/>
</dbReference>
<dbReference type="HPA" id="ENSG00000235942">
    <property type="expression patterns" value="Tissue enriched (skin)"/>
</dbReference>
<dbReference type="neXtProt" id="NX_A0A183"/>
<dbReference type="OpenTargets" id="ENSG00000235942"/>
<dbReference type="PharmGKB" id="PA162393834"/>
<dbReference type="VEuPathDB" id="HostDB:ENSG00000235942"/>
<dbReference type="eggNOG" id="ENOG502TE13">
    <property type="taxonomic scope" value="Eukaryota"/>
</dbReference>
<dbReference type="GeneTree" id="ENSGT00940000166289"/>
<dbReference type="HOGENOM" id="CLU_2589012_0_0_1"/>
<dbReference type="InParanoid" id="A0A183"/>
<dbReference type="OMA" id="HSEGCHS"/>
<dbReference type="OrthoDB" id="9628357at2759"/>
<dbReference type="PAN-GO" id="A0A183">
    <property type="GO annotations" value="0 GO annotations based on evolutionary models"/>
</dbReference>
<dbReference type="PhylomeDB" id="A0A183"/>
<dbReference type="PathwayCommons" id="A0A183"/>
<dbReference type="Reactome" id="R-HSA-6809371">
    <property type="pathway name" value="Formation of the cornified envelope"/>
</dbReference>
<dbReference type="SignaLink" id="A0A183"/>
<dbReference type="BioGRID-ORCS" id="448835">
    <property type="hits" value="12 hits in 1134 CRISPR screens"/>
</dbReference>
<dbReference type="GenomeRNAi" id="448835"/>
<dbReference type="Pharos" id="A0A183">
    <property type="development level" value="Tdark"/>
</dbReference>
<dbReference type="PRO" id="PR:A0A183"/>
<dbReference type="Proteomes" id="UP000005640">
    <property type="component" value="Chromosome 1"/>
</dbReference>
<dbReference type="RNAct" id="A0A183">
    <property type="molecule type" value="protein"/>
</dbReference>
<dbReference type="Bgee" id="ENSG00000235942">
    <property type="expression patterns" value="Expressed in skin of leg and 55 other cell types or tissues"/>
</dbReference>
<dbReference type="GO" id="GO:0031424">
    <property type="term" value="P:keratinization"/>
    <property type="evidence" value="ECO:0007669"/>
    <property type="project" value="UniProtKB-KW"/>
</dbReference>
<dbReference type="InterPro" id="IPR031716">
    <property type="entry name" value="LCE6A"/>
</dbReference>
<dbReference type="Pfam" id="PF15858">
    <property type="entry name" value="LCE6A"/>
    <property type="match status" value="1"/>
</dbReference>
<keyword id="KW-0417">Keratinization</keyword>
<keyword id="KW-1267">Proteomics identification</keyword>
<keyword id="KW-1185">Reference proteome</keyword>
<evidence type="ECO:0000250" key="1"/>
<evidence type="ECO:0000256" key="2">
    <source>
        <dbReference type="SAM" id="MobiDB-lite"/>
    </source>
</evidence>
<evidence type="ECO:0000305" key="3"/>
<protein>
    <recommendedName>
        <fullName>Late cornified envelope protein 6A</fullName>
    </recommendedName>
</protein>
<feature type="chain" id="PRO_0000313639" description="Late cornified envelope protein 6A">
    <location>
        <begin position="1"/>
        <end position="80"/>
    </location>
</feature>
<feature type="region of interest" description="Disordered" evidence="2">
    <location>
        <begin position="1"/>
        <end position="21"/>
    </location>
</feature>
<feature type="region of interest" description="Disordered" evidence="2">
    <location>
        <begin position="35"/>
        <end position="60"/>
    </location>
</feature>
<feature type="compositionally biased region" description="Polar residues" evidence="2">
    <location>
        <begin position="1"/>
        <end position="10"/>
    </location>
</feature>
<organism>
    <name type="scientific">Homo sapiens</name>
    <name type="common">Human</name>
    <dbReference type="NCBI Taxonomy" id="9606"/>
    <lineage>
        <taxon>Eukaryota</taxon>
        <taxon>Metazoa</taxon>
        <taxon>Chordata</taxon>
        <taxon>Craniata</taxon>
        <taxon>Vertebrata</taxon>
        <taxon>Euteleostomi</taxon>
        <taxon>Mammalia</taxon>
        <taxon>Eutheria</taxon>
        <taxon>Euarchontoglires</taxon>
        <taxon>Primates</taxon>
        <taxon>Haplorrhini</taxon>
        <taxon>Catarrhini</taxon>
        <taxon>Hominidae</taxon>
        <taxon>Homo</taxon>
    </lineage>
</organism>
<gene>
    <name type="primary">LCE6A</name>
    <name type="synonym">C1orf44</name>
</gene>
<reference key="1">
    <citation type="journal article" date="2007" name="Genome Biol.">
        <title>Large-scale identification of human genes implicated in epidermal barrier function.</title>
        <authorList>
            <person name="Toulza E."/>
            <person name="Mattiuzzo N.R."/>
            <person name="Galliano M.F."/>
            <person name="Jonca N."/>
            <person name="Dossat C."/>
            <person name="Jacob D."/>
            <person name="de Daruvar A."/>
            <person name="Wincker P."/>
            <person name="Serre G."/>
            <person name="Guerrin M."/>
        </authorList>
    </citation>
    <scope>NUCLEOTIDE SEQUENCE [MRNA]</scope>
    <source>
        <tissue>Epidermis</tissue>
    </source>
</reference>
<reference key="2">
    <citation type="journal article" date="2006" name="Nature">
        <title>The DNA sequence and biological annotation of human chromosome 1.</title>
        <authorList>
            <person name="Gregory S.G."/>
            <person name="Barlow K.F."/>
            <person name="McLay K.E."/>
            <person name="Kaul R."/>
            <person name="Swarbreck D."/>
            <person name="Dunham A."/>
            <person name="Scott C.E."/>
            <person name="Howe K.L."/>
            <person name="Woodfine K."/>
            <person name="Spencer C.C.A."/>
            <person name="Jones M.C."/>
            <person name="Gillson C."/>
            <person name="Searle S."/>
            <person name="Zhou Y."/>
            <person name="Kokocinski F."/>
            <person name="McDonald L."/>
            <person name="Evans R."/>
            <person name="Phillips K."/>
            <person name="Atkinson A."/>
            <person name="Cooper R."/>
            <person name="Jones C."/>
            <person name="Hall R.E."/>
            <person name="Andrews T.D."/>
            <person name="Lloyd C."/>
            <person name="Ainscough R."/>
            <person name="Almeida J.P."/>
            <person name="Ambrose K.D."/>
            <person name="Anderson F."/>
            <person name="Andrew R.W."/>
            <person name="Ashwell R.I.S."/>
            <person name="Aubin K."/>
            <person name="Babbage A.K."/>
            <person name="Bagguley C.L."/>
            <person name="Bailey J."/>
            <person name="Beasley H."/>
            <person name="Bethel G."/>
            <person name="Bird C.P."/>
            <person name="Bray-Allen S."/>
            <person name="Brown J.Y."/>
            <person name="Brown A.J."/>
            <person name="Buckley D."/>
            <person name="Burton J."/>
            <person name="Bye J."/>
            <person name="Carder C."/>
            <person name="Chapman J.C."/>
            <person name="Clark S.Y."/>
            <person name="Clarke G."/>
            <person name="Clee C."/>
            <person name="Cobley V."/>
            <person name="Collier R.E."/>
            <person name="Corby N."/>
            <person name="Coville G.J."/>
            <person name="Davies J."/>
            <person name="Deadman R."/>
            <person name="Dunn M."/>
            <person name="Earthrowl M."/>
            <person name="Ellington A.G."/>
            <person name="Errington H."/>
            <person name="Frankish A."/>
            <person name="Frankland J."/>
            <person name="French L."/>
            <person name="Garner P."/>
            <person name="Garnett J."/>
            <person name="Gay L."/>
            <person name="Ghori M.R.J."/>
            <person name="Gibson R."/>
            <person name="Gilby L.M."/>
            <person name="Gillett W."/>
            <person name="Glithero R.J."/>
            <person name="Grafham D.V."/>
            <person name="Griffiths C."/>
            <person name="Griffiths-Jones S."/>
            <person name="Grocock R."/>
            <person name="Hammond S."/>
            <person name="Harrison E.S.I."/>
            <person name="Hart E."/>
            <person name="Haugen E."/>
            <person name="Heath P.D."/>
            <person name="Holmes S."/>
            <person name="Holt K."/>
            <person name="Howden P.J."/>
            <person name="Hunt A.R."/>
            <person name="Hunt S.E."/>
            <person name="Hunter G."/>
            <person name="Isherwood J."/>
            <person name="James R."/>
            <person name="Johnson C."/>
            <person name="Johnson D."/>
            <person name="Joy A."/>
            <person name="Kay M."/>
            <person name="Kershaw J.K."/>
            <person name="Kibukawa M."/>
            <person name="Kimberley A.M."/>
            <person name="King A."/>
            <person name="Knights A.J."/>
            <person name="Lad H."/>
            <person name="Laird G."/>
            <person name="Lawlor S."/>
            <person name="Leongamornlert D.A."/>
            <person name="Lloyd D.M."/>
            <person name="Loveland J."/>
            <person name="Lovell J."/>
            <person name="Lush M.J."/>
            <person name="Lyne R."/>
            <person name="Martin S."/>
            <person name="Mashreghi-Mohammadi M."/>
            <person name="Matthews L."/>
            <person name="Matthews N.S.W."/>
            <person name="McLaren S."/>
            <person name="Milne S."/>
            <person name="Mistry S."/>
            <person name="Moore M.J.F."/>
            <person name="Nickerson T."/>
            <person name="O'Dell C.N."/>
            <person name="Oliver K."/>
            <person name="Palmeiri A."/>
            <person name="Palmer S.A."/>
            <person name="Parker A."/>
            <person name="Patel D."/>
            <person name="Pearce A.V."/>
            <person name="Peck A.I."/>
            <person name="Pelan S."/>
            <person name="Phelps K."/>
            <person name="Phillimore B.J."/>
            <person name="Plumb R."/>
            <person name="Rajan J."/>
            <person name="Raymond C."/>
            <person name="Rouse G."/>
            <person name="Saenphimmachak C."/>
            <person name="Sehra H.K."/>
            <person name="Sheridan E."/>
            <person name="Shownkeen R."/>
            <person name="Sims S."/>
            <person name="Skuce C.D."/>
            <person name="Smith M."/>
            <person name="Steward C."/>
            <person name="Subramanian S."/>
            <person name="Sycamore N."/>
            <person name="Tracey A."/>
            <person name="Tromans A."/>
            <person name="Van Helmond Z."/>
            <person name="Wall M."/>
            <person name="Wallis J.M."/>
            <person name="White S."/>
            <person name="Whitehead S.L."/>
            <person name="Wilkinson J.E."/>
            <person name="Willey D.L."/>
            <person name="Williams H."/>
            <person name="Wilming L."/>
            <person name="Wray P.W."/>
            <person name="Wu Z."/>
            <person name="Coulson A."/>
            <person name="Vaudin M."/>
            <person name="Sulston J.E."/>
            <person name="Durbin R.M."/>
            <person name="Hubbard T."/>
            <person name="Wooster R."/>
            <person name="Dunham I."/>
            <person name="Carter N.P."/>
            <person name="McVean G."/>
            <person name="Ross M.T."/>
            <person name="Harrow J."/>
            <person name="Olson M.V."/>
            <person name="Beck S."/>
            <person name="Rogers J."/>
            <person name="Bentley D.R."/>
        </authorList>
    </citation>
    <scope>NUCLEOTIDE SEQUENCE [LARGE SCALE GENOMIC DNA]</scope>
</reference>
<name>LCE6A_HUMAN</name>
<comment type="function">
    <text evidence="1">Precursors of the cornified envelope of the stratum corneum.</text>
</comment>
<comment type="miscellaneous">
    <text>Belongs to the LCE cluster present on 1q21.</text>
</comment>
<comment type="similarity">
    <text evidence="3">Belongs to the LCE family.</text>
</comment>